<accession>A9MM39</accession>
<protein>
    <recommendedName>
        <fullName evidence="1">tRNA sulfurtransferase</fullName>
        <ecNumber evidence="1">2.8.1.4</ecNumber>
    </recommendedName>
    <alternativeName>
        <fullName evidence="1">Sulfur carrier protein ThiS sulfurtransferase</fullName>
    </alternativeName>
    <alternativeName>
        <fullName evidence="1">Thiamine biosynthesis protein ThiI</fullName>
    </alternativeName>
    <alternativeName>
        <fullName evidence="1">tRNA 4-thiouridine synthase</fullName>
    </alternativeName>
</protein>
<proteinExistence type="inferred from homology"/>
<feature type="chain" id="PRO_1000074257" description="tRNA sulfurtransferase">
    <location>
        <begin position="1"/>
        <end position="482"/>
    </location>
</feature>
<feature type="domain" description="THUMP" evidence="1">
    <location>
        <begin position="61"/>
        <end position="165"/>
    </location>
</feature>
<feature type="domain" description="Rhodanese" evidence="1">
    <location>
        <begin position="404"/>
        <end position="482"/>
    </location>
</feature>
<feature type="active site" description="Cysteine persulfide intermediate" evidence="1">
    <location>
        <position position="456"/>
    </location>
</feature>
<feature type="binding site" evidence="1">
    <location>
        <begin position="183"/>
        <end position="184"/>
    </location>
    <ligand>
        <name>ATP</name>
        <dbReference type="ChEBI" id="CHEBI:30616"/>
    </ligand>
</feature>
<feature type="binding site" evidence="1">
    <location>
        <position position="265"/>
    </location>
    <ligand>
        <name>ATP</name>
        <dbReference type="ChEBI" id="CHEBI:30616"/>
    </ligand>
</feature>
<feature type="binding site" evidence="1">
    <location>
        <position position="287"/>
    </location>
    <ligand>
        <name>ATP</name>
        <dbReference type="ChEBI" id="CHEBI:30616"/>
    </ligand>
</feature>
<feature type="binding site" evidence="1">
    <location>
        <position position="296"/>
    </location>
    <ligand>
        <name>ATP</name>
        <dbReference type="ChEBI" id="CHEBI:30616"/>
    </ligand>
</feature>
<feature type="disulfide bond" description="Redox-active" evidence="1">
    <location>
        <begin position="344"/>
        <end position="456"/>
    </location>
</feature>
<comment type="function">
    <text evidence="1">Catalyzes the ATP-dependent transfer of a sulfur to tRNA to produce 4-thiouridine in position 8 of tRNAs, which functions as a near-UV photosensor. Also catalyzes the transfer of sulfur to the sulfur carrier protein ThiS, forming ThiS-thiocarboxylate. This is a step in the synthesis of thiazole, in the thiamine biosynthesis pathway. The sulfur is donated as persulfide by IscS.</text>
</comment>
<comment type="catalytic activity">
    <reaction evidence="1">
        <text>[ThiI sulfur-carrier protein]-S-sulfanyl-L-cysteine + a uridine in tRNA + 2 reduced [2Fe-2S]-[ferredoxin] + ATP + H(+) = [ThiI sulfur-carrier protein]-L-cysteine + a 4-thiouridine in tRNA + 2 oxidized [2Fe-2S]-[ferredoxin] + AMP + diphosphate</text>
        <dbReference type="Rhea" id="RHEA:24176"/>
        <dbReference type="Rhea" id="RHEA-COMP:10000"/>
        <dbReference type="Rhea" id="RHEA-COMP:10001"/>
        <dbReference type="Rhea" id="RHEA-COMP:13337"/>
        <dbReference type="Rhea" id="RHEA-COMP:13338"/>
        <dbReference type="Rhea" id="RHEA-COMP:13339"/>
        <dbReference type="Rhea" id="RHEA-COMP:13340"/>
        <dbReference type="ChEBI" id="CHEBI:15378"/>
        <dbReference type="ChEBI" id="CHEBI:29950"/>
        <dbReference type="ChEBI" id="CHEBI:30616"/>
        <dbReference type="ChEBI" id="CHEBI:33019"/>
        <dbReference type="ChEBI" id="CHEBI:33737"/>
        <dbReference type="ChEBI" id="CHEBI:33738"/>
        <dbReference type="ChEBI" id="CHEBI:61963"/>
        <dbReference type="ChEBI" id="CHEBI:65315"/>
        <dbReference type="ChEBI" id="CHEBI:136798"/>
        <dbReference type="ChEBI" id="CHEBI:456215"/>
        <dbReference type="EC" id="2.8.1.4"/>
    </reaction>
</comment>
<comment type="catalytic activity">
    <reaction evidence="1">
        <text>[ThiS sulfur-carrier protein]-C-terminal Gly-Gly-AMP + S-sulfanyl-L-cysteinyl-[cysteine desulfurase] + AH2 = [ThiS sulfur-carrier protein]-C-terminal-Gly-aminoethanethioate + L-cysteinyl-[cysteine desulfurase] + A + AMP + 2 H(+)</text>
        <dbReference type="Rhea" id="RHEA:43340"/>
        <dbReference type="Rhea" id="RHEA-COMP:12157"/>
        <dbReference type="Rhea" id="RHEA-COMP:12158"/>
        <dbReference type="Rhea" id="RHEA-COMP:12910"/>
        <dbReference type="Rhea" id="RHEA-COMP:19908"/>
        <dbReference type="ChEBI" id="CHEBI:13193"/>
        <dbReference type="ChEBI" id="CHEBI:15378"/>
        <dbReference type="ChEBI" id="CHEBI:17499"/>
        <dbReference type="ChEBI" id="CHEBI:29950"/>
        <dbReference type="ChEBI" id="CHEBI:61963"/>
        <dbReference type="ChEBI" id="CHEBI:90618"/>
        <dbReference type="ChEBI" id="CHEBI:232372"/>
        <dbReference type="ChEBI" id="CHEBI:456215"/>
    </reaction>
</comment>
<comment type="pathway">
    <text evidence="1">Cofactor biosynthesis; thiamine diphosphate biosynthesis.</text>
</comment>
<comment type="subcellular location">
    <subcellularLocation>
        <location evidence="1">Cytoplasm</location>
    </subcellularLocation>
</comment>
<comment type="similarity">
    <text evidence="1">Belongs to the ThiI family.</text>
</comment>
<gene>
    <name evidence="1" type="primary">thiI</name>
    <name type="ordered locus">SARI_02502</name>
</gene>
<keyword id="KW-0067">ATP-binding</keyword>
<keyword id="KW-0963">Cytoplasm</keyword>
<keyword id="KW-1015">Disulfide bond</keyword>
<keyword id="KW-0547">Nucleotide-binding</keyword>
<keyword id="KW-0676">Redox-active center</keyword>
<keyword id="KW-1185">Reference proteome</keyword>
<keyword id="KW-0694">RNA-binding</keyword>
<keyword id="KW-0784">Thiamine biosynthesis</keyword>
<keyword id="KW-0808">Transferase</keyword>
<keyword id="KW-0820">tRNA-binding</keyword>
<sequence length="482" mass="54745">MKFIIKLFPEITIKSQSVRLRFIKILAGNIRNVLKHYDETLAVVRHWDNIEVRAKDENQRLAIRDALTRIPGIHHILEVEDVPFTDMHDIFEKALAQYREQLEGKTFCVRVKRRGKHEFSSIEVERYVGGGLNQHIESARVKLANPDVTVHLEVEDDRLLLIKGRYEGIGGFPIGTQEDVLSLISGGFDSGVSSYMLMRRGCRVHYCFFNLGGAAHEIGVRQVAHYLWNRFGSSHRVRFVAINFEPVVGEILEKVDDGQMGVVLKRMMVRAASKVAERYGVQALVTGEALGQVSSQTLTNLRLIDNVSDTLILRPLISYDKEHIINLARQIGTEDFARTMPEYCGVISKSPTVKAIKAKIEAEEENFDFSILDKVVEEANNVDIREIAQQTQQEVVEVETVSGFGANDVILDIRSIDEQDDKPLKVEGIDVVSLPFYKLSTKFGDLDQSKTWLLWCERGVMSRLQALYLREQGFANVKVYRP</sequence>
<evidence type="ECO:0000255" key="1">
    <source>
        <dbReference type="HAMAP-Rule" id="MF_00021"/>
    </source>
</evidence>
<reference key="1">
    <citation type="submission" date="2007-11" db="EMBL/GenBank/DDBJ databases">
        <authorList>
            <consortium name="The Salmonella enterica serovar Arizonae Genome Sequencing Project"/>
            <person name="McClelland M."/>
            <person name="Sanderson E.K."/>
            <person name="Porwollik S."/>
            <person name="Spieth J."/>
            <person name="Clifton W.S."/>
            <person name="Fulton R."/>
            <person name="Chunyan W."/>
            <person name="Wollam A."/>
            <person name="Shah N."/>
            <person name="Pepin K."/>
            <person name="Bhonagiri V."/>
            <person name="Nash W."/>
            <person name="Johnson M."/>
            <person name="Thiruvilangam P."/>
            <person name="Wilson R."/>
        </authorList>
    </citation>
    <scope>NUCLEOTIDE SEQUENCE [LARGE SCALE GENOMIC DNA]</scope>
    <source>
        <strain>ATCC BAA-731 / CDC346-86 / RSK2980</strain>
    </source>
</reference>
<name>THII_SALAR</name>
<dbReference type="EC" id="2.8.1.4" evidence="1"/>
<dbReference type="EMBL" id="CP000880">
    <property type="protein sequence ID" value="ABX22361.1"/>
    <property type="molecule type" value="Genomic_DNA"/>
</dbReference>
<dbReference type="SMR" id="A9MM39"/>
<dbReference type="STRING" id="41514.SARI_02502"/>
<dbReference type="KEGG" id="ses:SARI_02502"/>
<dbReference type="HOGENOM" id="CLU_037952_4_1_6"/>
<dbReference type="UniPathway" id="UPA00060"/>
<dbReference type="Proteomes" id="UP000002084">
    <property type="component" value="Chromosome"/>
</dbReference>
<dbReference type="GO" id="GO:0005829">
    <property type="term" value="C:cytosol"/>
    <property type="evidence" value="ECO:0007669"/>
    <property type="project" value="TreeGrafter"/>
</dbReference>
<dbReference type="GO" id="GO:0005524">
    <property type="term" value="F:ATP binding"/>
    <property type="evidence" value="ECO:0007669"/>
    <property type="project" value="UniProtKB-UniRule"/>
</dbReference>
<dbReference type="GO" id="GO:0004810">
    <property type="term" value="F:CCA tRNA nucleotidyltransferase activity"/>
    <property type="evidence" value="ECO:0007669"/>
    <property type="project" value="InterPro"/>
</dbReference>
<dbReference type="GO" id="GO:0000049">
    <property type="term" value="F:tRNA binding"/>
    <property type="evidence" value="ECO:0007669"/>
    <property type="project" value="UniProtKB-UniRule"/>
</dbReference>
<dbReference type="GO" id="GO:0140741">
    <property type="term" value="F:tRNA-uracil-4 sulfurtransferase activity"/>
    <property type="evidence" value="ECO:0007669"/>
    <property type="project" value="UniProtKB-EC"/>
</dbReference>
<dbReference type="GO" id="GO:0009228">
    <property type="term" value="P:thiamine biosynthetic process"/>
    <property type="evidence" value="ECO:0007669"/>
    <property type="project" value="UniProtKB-KW"/>
</dbReference>
<dbReference type="GO" id="GO:0009229">
    <property type="term" value="P:thiamine diphosphate biosynthetic process"/>
    <property type="evidence" value="ECO:0007669"/>
    <property type="project" value="UniProtKB-UniRule"/>
</dbReference>
<dbReference type="GO" id="GO:0052837">
    <property type="term" value="P:thiazole biosynthetic process"/>
    <property type="evidence" value="ECO:0007669"/>
    <property type="project" value="InterPro"/>
</dbReference>
<dbReference type="GO" id="GO:0002937">
    <property type="term" value="P:tRNA 4-thiouridine biosynthesis"/>
    <property type="evidence" value="ECO:0007669"/>
    <property type="project" value="TreeGrafter"/>
</dbReference>
<dbReference type="CDD" id="cd01712">
    <property type="entry name" value="PPase_ThiI"/>
    <property type="match status" value="1"/>
</dbReference>
<dbReference type="CDD" id="cd00158">
    <property type="entry name" value="RHOD"/>
    <property type="match status" value="1"/>
</dbReference>
<dbReference type="CDD" id="cd11716">
    <property type="entry name" value="THUMP_ThiI"/>
    <property type="match status" value="1"/>
</dbReference>
<dbReference type="FunFam" id="3.30.2130.30:FF:000002">
    <property type="entry name" value="tRNA sulfurtransferase"/>
    <property type="match status" value="1"/>
</dbReference>
<dbReference type="FunFam" id="3.40.250.10:FF:000003">
    <property type="entry name" value="tRNA sulfurtransferase"/>
    <property type="match status" value="1"/>
</dbReference>
<dbReference type="FunFam" id="3.40.50.620:FF:000029">
    <property type="entry name" value="tRNA sulfurtransferase"/>
    <property type="match status" value="1"/>
</dbReference>
<dbReference type="Gene3D" id="3.30.2130.30">
    <property type="match status" value="1"/>
</dbReference>
<dbReference type="Gene3D" id="3.40.50.620">
    <property type="entry name" value="HUPs"/>
    <property type="match status" value="1"/>
</dbReference>
<dbReference type="Gene3D" id="3.40.250.10">
    <property type="entry name" value="Rhodanese-like domain"/>
    <property type="match status" value="1"/>
</dbReference>
<dbReference type="HAMAP" id="MF_00021">
    <property type="entry name" value="ThiI"/>
    <property type="match status" value="1"/>
</dbReference>
<dbReference type="InterPro" id="IPR001763">
    <property type="entry name" value="Rhodanese-like_dom"/>
</dbReference>
<dbReference type="InterPro" id="IPR036873">
    <property type="entry name" value="Rhodanese-like_dom_sf"/>
</dbReference>
<dbReference type="InterPro" id="IPR014729">
    <property type="entry name" value="Rossmann-like_a/b/a_fold"/>
</dbReference>
<dbReference type="InterPro" id="IPR020536">
    <property type="entry name" value="ThiI_AANH"/>
</dbReference>
<dbReference type="InterPro" id="IPR054173">
    <property type="entry name" value="ThiI_fer"/>
</dbReference>
<dbReference type="InterPro" id="IPR049961">
    <property type="entry name" value="ThiI_N"/>
</dbReference>
<dbReference type="InterPro" id="IPR026340">
    <property type="entry name" value="THII_Thiazole_biosynth_dom"/>
</dbReference>
<dbReference type="InterPro" id="IPR004114">
    <property type="entry name" value="THUMP_dom"/>
</dbReference>
<dbReference type="InterPro" id="IPR049962">
    <property type="entry name" value="THUMP_ThiI"/>
</dbReference>
<dbReference type="InterPro" id="IPR003720">
    <property type="entry name" value="tRNA_STrfase"/>
</dbReference>
<dbReference type="InterPro" id="IPR050102">
    <property type="entry name" value="tRNA_sulfurtransferase_ThiI"/>
</dbReference>
<dbReference type="NCBIfam" id="TIGR04271">
    <property type="entry name" value="ThiI_C_thiazole"/>
    <property type="match status" value="1"/>
</dbReference>
<dbReference type="NCBIfam" id="TIGR00342">
    <property type="entry name" value="tRNA uracil 4-sulfurtransferase ThiI"/>
    <property type="match status" value="1"/>
</dbReference>
<dbReference type="PANTHER" id="PTHR43209">
    <property type="entry name" value="TRNA SULFURTRANSFERASE"/>
    <property type="match status" value="1"/>
</dbReference>
<dbReference type="PANTHER" id="PTHR43209:SF1">
    <property type="entry name" value="TRNA SULFURTRANSFERASE"/>
    <property type="match status" value="1"/>
</dbReference>
<dbReference type="Pfam" id="PF02568">
    <property type="entry name" value="ThiI"/>
    <property type="match status" value="1"/>
</dbReference>
<dbReference type="Pfam" id="PF22025">
    <property type="entry name" value="ThiI_fer"/>
    <property type="match status" value="1"/>
</dbReference>
<dbReference type="Pfam" id="PF02926">
    <property type="entry name" value="THUMP"/>
    <property type="match status" value="1"/>
</dbReference>
<dbReference type="SMART" id="SM00981">
    <property type="entry name" value="THUMP"/>
    <property type="match status" value="1"/>
</dbReference>
<dbReference type="SUPFAM" id="SSF52402">
    <property type="entry name" value="Adenine nucleotide alpha hydrolases-like"/>
    <property type="match status" value="1"/>
</dbReference>
<dbReference type="SUPFAM" id="SSF52821">
    <property type="entry name" value="Rhodanese/Cell cycle control phosphatase"/>
    <property type="match status" value="1"/>
</dbReference>
<dbReference type="SUPFAM" id="SSF143437">
    <property type="entry name" value="THUMP domain-like"/>
    <property type="match status" value="1"/>
</dbReference>
<dbReference type="PROSITE" id="PS50206">
    <property type="entry name" value="RHODANESE_3"/>
    <property type="match status" value="1"/>
</dbReference>
<dbReference type="PROSITE" id="PS51165">
    <property type="entry name" value="THUMP"/>
    <property type="match status" value="1"/>
</dbReference>
<organism>
    <name type="scientific">Salmonella arizonae (strain ATCC BAA-731 / CDC346-86 / RSK2980)</name>
    <dbReference type="NCBI Taxonomy" id="41514"/>
    <lineage>
        <taxon>Bacteria</taxon>
        <taxon>Pseudomonadati</taxon>
        <taxon>Pseudomonadota</taxon>
        <taxon>Gammaproteobacteria</taxon>
        <taxon>Enterobacterales</taxon>
        <taxon>Enterobacteriaceae</taxon>
        <taxon>Salmonella</taxon>
    </lineage>
</organism>